<accession>A8A899</accession>
<dbReference type="EC" id="2.1.1.172" evidence="1"/>
<dbReference type="EMBL" id="CP000802">
    <property type="protein sequence ID" value="ABV08753.1"/>
    <property type="molecule type" value="Genomic_DNA"/>
</dbReference>
<dbReference type="RefSeq" id="WP_001272319.1">
    <property type="nucleotide sequence ID" value="NC_009800.1"/>
</dbReference>
<dbReference type="SMR" id="A8A899"/>
<dbReference type="KEGG" id="ecx:EcHS_A4605"/>
<dbReference type="HOGENOM" id="CLU_049581_0_1_6"/>
<dbReference type="GO" id="GO:0005737">
    <property type="term" value="C:cytoplasm"/>
    <property type="evidence" value="ECO:0007669"/>
    <property type="project" value="UniProtKB-SubCell"/>
</dbReference>
<dbReference type="GO" id="GO:0052914">
    <property type="term" value="F:16S rRNA (guanine(1207)-N(2))-methyltransferase activity"/>
    <property type="evidence" value="ECO:0007669"/>
    <property type="project" value="UniProtKB-EC"/>
</dbReference>
<dbReference type="GO" id="GO:0003676">
    <property type="term" value="F:nucleic acid binding"/>
    <property type="evidence" value="ECO:0007669"/>
    <property type="project" value="InterPro"/>
</dbReference>
<dbReference type="CDD" id="cd02440">
    <property type="entry name" value="AdoMet_MTases"/>
    <property type="match status" value="1"/>
</dbReference>
<dbReference type="FunFam" id="3.40.50.150:FF:000058">
    <property type="entry name" value="Ribosomal RNA small subunit methyltransferase C"/>
    <property type="match status" value="1"/>
</dbReference>
<dbReference type="FunFam" id="3.40.50.150:FF:000063">
    <property type="entry name" value="Ribosomal RNA small subunit methyltransferase C"/>
    <property type="match status" value="1"/>
</dbReference>
<dbReference type="Gene3D" id="3.40.50.150">
    <property type="entry name" value="Vaccinia Virus protein VP39"/>
    <property type="match status" value="2"/>
</dbReference>
<dbReference type="HAMAP" id="MF_01862">
    <property type="entry name" value="16SrRNA_methyltr_C"/>
    <property type="match status" value="1"/>
</dbReference>
<dbReference type="InterPro" id="IPR002052">
    <property type="entry name" value="DNA_methylase_N6_adenine_CS"/>
</dbReference>
<dbReference type="InterPro" id="IPR013675">
    <property type="entry name" value="Mtase_sm_N"/>
</dbReference>
<dbReference type="InterPro" id="IPR023543">
    <property type="entry name" value="rRNA_ssu_MeTfrase_C"/>
</dbReference>
<dbReference type="InterPro" id="IPR046977">
    <property type="entry name" value="RsmC/RlmG"/>
</dbReference>
<dbReference type="InterPro" id="IPR029063">
    <property type="entry name" value="SAM-dependent_MTases_sf"/>
</dbReference>
<dbReference type="InterPro" id="IPR007848">
    <property type="entry name" value="Small_mtfrase_dom"/>
</dbReference>
<dbReference type="NCBIfam" id="NF007023">
    <property type="entry name" value="PRK09489.1"/>
    <property type="match status" value="1"/>
</dbReference>
<dbReference type="PANTHER" id="PTHR47816">
    <property type="entry name" value="RIBOSOMAL RNA SMALL SUBUNIT METHYLTRANSFERASE C"/>
    <property type="match status" value="1"/>
</dbReference>
<dbReference type="PANTHER" id="PTHR47816:SF4">
    <property type="entry name" value="RIBOSOMAL RNA SMALL SUBUNIT METHYLTRANSFERASE C"/>
    <property type="match status" value="1"/>
</dbReference>
<dbReference type="Pfam" id="PF05175">
    <property type="entry name" value="MTS"/>
    <property type="match status" value="1"/>
</dbReference>
<dbReference type="Pfam" id="PF08468">
    <property type="entry name" value="MTS_N"/>
    <property type="match status" value="1"/>
</dbReference>
<dbReference type="SUPFAM" id="SSF53335">
    <property type="entry name" value="S-adenosyl-L-methionine-dependent methyltransferases"/>
    <property type="match status" value="1"/>
</dbReference>
<gene>
    <name evidence="1" type="primary">rsmC</name>
    <name type="ordered locus">EcHS_A4605</name>
</gene>
<name>RSMC_ECOHS</name>
<evidence type="ECO:0000255" key="1">
    <source>
        <dbReference type="HAMAP-Rule" id="MF_01862"/>
    </source>
</evidence>
<keyword id="KW-0963">Cytoplasm</keyword>
<keyword id="KW-0489">Methyltransferase</keyword>
<keyword id="KW-0698">rRNA processing</keyword>
<keyword id="KW-0949">S-adenosyl-L-methionine</keyword>
<keyword id="KW-0808">Transferase</keyword>
<organism>
    <name type="scientific">Escherichia coli O9:H4 (strain HS)</name>
    <dbReference type="NCBI Taxonomy" id="331112"/>
    <lineage>
        <taxon>Bacteria</taxon>
        <taxon>Pseudomonadati</taxon>
        <taxon>Pseudomonadota</taxon>
        <taxon>Gammaproteobacteria</taxon>
        <taxon>Enterobacterales</taxon>
        <taxon>Enterobacteriaceae</taxon>
        <taxon>Escherichia</taxon>
    </lineage>
</organism>
<proteinExistence type="inferred from homology"/>
<feature type="chain" id="PRO_0000369715" description="Ribosomal RNA small subunit methyltransferase C">
    <location>
        <begin position="1"/>
        <end position="343"/>
    </location>
</feature>
<protein>
    <recommendedName>
        <fullName evidence="1">Ribosomal RNA small subunit methyltransferase C</fullName>
        <ecNumber evidence="1">2.1.1.172</ecNumber>
    </recommendedName>
    <alternativeName>
        <fullName evidence="1">16S rRNA m2G1207 methyltransferase</fullName>
    </alternativeName>
    <alternativeName>
        <fullName evidence="1">rRNA (guanine-N(2)-)-methyltransferase RsmC</fullName>
    </alternativeName>
</protein>
<comment type="function">
    <text evidence="1">Specifically methylates the guanine in position 1207 of 16S rRNA in the 30S particle.</text>
</comment>
<comment type="catalytic activity">
    <reaction evidence="1">
        <text>guanosine(1207) in 16S rRNA + S-adenosyl-L-methionine = N(2)-methylguanosine(1207) in 16S rRNA + S-adenosyl-L-homocysteine + H(+)</text>
        <dbReference type="Rhea" id="RHEA:42736"/>
        <dbReference type="Rhea" id="RHEA-COMP:10213"/>
        <dbReference type="Rhea" id="RHEA-COMP:10214"/>
        <dbReference type="ChEBI" id="CHEBI:15378"/>
        <dbReference type="ChEBI" id="CHEBI:57856"/>
        <dbReference type="ChEBI" id="CHEBI:59789"/>
        <dbReference type="ChEBI" id="CHEBI:74269"/>
        <dbReference type="ChEBI" id="CHEBI:74481"/>
        <dbReference type="EC" id="2.1.1.172"/>
    </reaction>
</comment>
<comment type="subunit">
    <text evidence="1">Monomer.</text>
</comment>
<comment type="subcellular location">
    <subcellularLocation>
        <location evidence="1">Cytoplasm</location>
    </subcellularLocation>
</comment>
<comment type="similarity">
    <text evidence="1">Belongs to the methyltransferase superfamily. RsmC family.</text>
</comment>
<reference key="1">
    <citation type="journal article" date="2008" name="J. Bacteriol.">
        <title>The pangenome structure of Escherichia coli: comparative genomic analysis of E. coli commensal and pathogenic isolates.</title>
        <authorList>
            <person name="Rasko D.A."/>
            <person name="Rosovitz M.J."/>
            <person name="Myers G.S.A."/>
            <person name="Mongodin E.F."/>
            <person name="Fricke W.F."/>
            <person name="Gajer P."/>
            <person name="Crabtree J."/>
            <person name="Sebaihia M."/>
            <person name="Thomson N.R."/>
            <person name="Chaudhuri R."/>
            <person name="Henderson I.R."/>
            <person name="Sperandio V."/>
            <person name="Ravel J."/>
        </authorList>
    </citation>
    <scope>NUCLEOTIDE SEQUENCE [LARGE SCALE GENOMIC DNA]</scope>
    <source>
        <strain>HS</strain>
    </source>
</reference>
<sequence length="343" mass="37657">MSAFTPASEVLLRHSDDFEQSRILFAGDLQDDLPARLDTAASRAHTQQFHHWQVLSRQMGDNARFSLVATADDVADCDTLIYYWPKNKPEAQFQLMNLLSLLPVGTDIFVVGENRSGVRSAEQMLADYAPLNKVDSARRCGLYFGRLEKQPVFDADKFWGEYSVDGLTVKTLPGVFSRDGLDVGSQLLLSTLTPHTKGKVLDVGCGAGVLSVAFARHSPKIRLTLCDVSAPAVEASRATLAANCVEGEVFASNVFSEVKGRFDMIISNPPFHDGMQTSLDAAQTLIRGAVRHLNSGGELRIVANAFLPYPDVLDETFGFHEVIAQTGRFKVYRAIMTRQAKKG</sequence>